<protein>
    <recommendedName>
        <fullName>Transketolase 2</fullName>
        <shortName>TK 2</shortName>
        <ecNumber evidence="3">2.2.1.1</ecNumber>
    </recommendedName>
</protein>
<sequence>MSRKDLANAIRALSMDAVQKANSGHPGAPMGMADIAEVLWNDFLKHNPTDPTWYDRDRFILSNGHASMLLYSLLHLTGYDLPLEELKNFRQLHSKTPGHPEIGYTPGVETTTGPLGQGLANAVGLAIAERTLAAQFNQPDHEIVDHFTYVFMGDGCLMEGISHEVCSLAGTLGLGKLIGFYDHNGISIDGETEGWFTDDTAKRFEAYHWHVIHEIDGHDPQAVKEAILEAQSVKDKPSLIICRTVIGFGSPNKAGKEEAHGAPLGEEEVALARQKLGWHHPPFEIPKEIYHAWDAREKGEKAQQSWNEKFAAYKKAHPQLAEEFTRRMSGGLPKDWEKTTQKYINELQANPAKIATRKASQNTLNAYGPMLPELLGGSADLAPSNLTIWKGSVSLKEDPAGNYIHYGVREFGMTAIANGIAHHGGFVPYTATFLMFVEYARNAARMAALMKARQIMVYTHDSIGLGEDGPTHQAVEQLASLRLTPNFSTWRPCDQVEAAVGWKLAVERHNGPTALILSRQNLAQVERTPDQVKEIARGGYVLKDSGGKPDIILIATGSEMEITLQAAEKLAGEGRNVRVVSLPSTDIFDAQDEEYRESVLPSNVAARVAVEAGIADYWYKYVGLKGAIVGMTGYGESAPADKLFPFFGFTAENIVAKAHKVLGVKGA</sequence>
<name>TKT2_ECOLI</name>
<dbReference type="EC" id="2.2.1.1" evidence="3"/>
<dbReference type="EMBL" id="D12473">
    <property type="protein sequence ID" value="BAA02039.1"/>
    <property type="molecule type" value="Genomic_DNA"/>
</dbReference>
<dbReference type="EMBL" id="U00096">
    <property type="protein sequence ID" value="AAC75518.1"/>
    <property type="molecule type" value="Genomic_DNA"/>
</dbReference>
<dbReference type="EMBL" id="AP009048">
    <property type="protein sequence ID" value="BAA16340.1"/>
    <property type="molecule type" value="Genomic_DNA"/>
</dbReference>
<dbReference type="PIR" id="A48660">
    <property type="entry name" value="A48660"/>
</dbReference>
<dbReference type="RefSeq" id="NP_416960.1">
    <property type="nucleotide sequence ID" value="NC_000913.3"/>
</dbReference>
<dbReference type="SMR" id="P33570"/>
<dbReference type="BioGRID" id="4262216">
    <property type="interactions" value="23"/>
</dbReference>
<dbReference type="BioGRID" id="850232">
    <property type="interactions" value="1"/>
</dbReference>
<dbReference type="DIP" id="DIP-10999N"/>
<dbReference type="FunCoup" id="P33570">
    <property type="interactions" value="760"/>
</dbReference>
<dbReference type="IntAct" id="P33570">
    <property type="interactions" value="6"/>
</dbReference>
<dbReference type="STRING" id="511145.b2465"/>
<dbReference type="iPTMnet" id="P33570"/>
<dbReference type="jPOST" id="P33570"/>
<dbReference type="PaxDb" id="511145-b2465"/>
<dbReference type="EnsemblBacteria" id="AAC75518">
    <property type="protein sequence ID" value="AAC75518"/>
    <property type="gene ID" value="b2465"/>
</dbReference>
<dbReference type="GeneID" id="945865"/>
<dbReference type="KEGG" id="ecj:JW2449"/>
<dbReference type="KEGG" id="eco:b2465"/>
<dbReference type="KEGG" id="ecoc:C3026_13675"/>
<dbReference type="PATRIC" id="fig|511145.12.peg.2559"/>
<dbReference type="EchoBASE" id="EB2024"/>
<dbReference type="eggNOG" id="COG0021">
    <property type="taxonomic scope" value="Bacteria"/>
</dbReference>
<dbReference type="HOGENOM" id="CLU_009227_0_0_6"/>
<dbReference type="InParanoid" id="P33570"/>
<dbReference type="OMA" id="VYCLCGD"/>
<dbReference type="OrthoDB" id="8732661at2"/>
<dbReference type="PhylomeDB" id="P33570"/>
<dbReference type="BioCyc" id="EcoCyc:TRANSKETOII-MONOMER"/>
<dbReference type="BioCyc" id="MetaCyc:TRANSKETOII-MONOMER"/>
<dbReference type="BRENDA" id="2.2.1.1">
    <property type="organism ID" value="2026"/>
</dbReference>
<dbReference type="PRO" id="PR:P33570"/>
<dbReference type="Proteomes" id="UP000000625">
    <property type="component" value="Chromosome"/>
</dbReference>
<dbReference type="GO" id="GO:0005829">
    <property type="term" value="C:cytosol"/>
    <property type="evidence" value="ECO:0000314"/>
    <property type="project" value="EcoCyc"/>
</dbReference>
<dbReference type="GO" id="GO:0046872">
    <property type="term" value="F:metal ion binding"/>
    <property type="evidence" value="ECO:0007669"/>
    <property type="project" value="UniProtKB-KW"/>
</dbReference>
<dbReference type="GO" id="GO:0004802">
    <property type="term" value="F:transketolase activity"/>
    <property type="evidence" value="ECO:0000315"/>
    <property type="project" value="EcoliWiki"/>
</dbReference>
<dbReference type="GO" id="GO:0006098">
    <property type="term" value="P:pentose-phosphate shunt"/>
    <property type="evidence" value="ECO:0000318"/>
    <property type="project" value="GO_Central"/>
</dbReference>
<dbReference type="GO" id="GO:0009052">
    <property type="term" value="P:pentose-phosphate shunt, non-oxidative branch"/>
    <property type="evidence" value="ECO:0000269"/>
    <property type="project" value="EcoCyc"/>
</dbReference>
<dbReference type="CDD" id="cd07033">
    <property type="entry name" value="TPP_PYR_DXS_TK_like"/>
    <property type="match status" value="1"/>
</dbReference>
<dbReference type="CDD" id="cd02012">
    <property type="entry name" value="TPP_TK"/>
    <property type="match status" value="1"/>
</dbReference>
<dbReference type="FunFam" id="3.40.50.920:FF:000003">
    <property type="entry name" value="Transketolase"/>
    <property type="match status" value="1"/>
</dbReference>
<dbReference type="FunFam" id="3.40.50.970:FF:000003">
    <property type="entry name" value="Transketolase"/>
    <property type="match status" value="1"/>
</dbReference>
<dbReference type="FunFam" id="3.40.50.970:FF:000004">
    <property type="entry name" value="Transketolase"/>
    <property type="match status" value="1"/>
</dbReference>
<dbReference type="Gene3D" id="3.40.50.920">
    <property type="match status" value="1"/>
</dbReference>
<dbReference type="Gene3D" id="3.40.50.970">
    <property type="match status" value="2"/>
</dbReference>
<dbReference type="InterPro" id="IPR029061">
    <property type="entry name" value="THDP-binding"/>
</dbReference>
<dbReference type="InterPro" id="IPR009014">
    <property type="entry name" value="Transketo_C/PFOR_II"/>
</dbReference>
<dbReference type="InterPro" id="IPR055152">
    <property type="entry name" value="Transketolase-like_C_2"/>
</dbReference>
<dbReference type="InterPro" id="IPR005475">
    <property type="entry name" value="Transketolase-like_Pyr-bd"/>
</dbReference>
<dbReference type="InterPro" id="IPR005478">
    <property type="entry name" value="Transketolase_bac-like"/>
</dbReference>
<dbReference type="InterPro" id="IPR020826">
    <property type="entry name" value="Transketolase_BS"/>
</dbReference>
<dbReference type="InterPro" id="IPR049557">
    <property type="entry name" value="Transketolase_CS"/>
</dbReference>
<dbReference type="InterPro" id="IPR033247">
    <property type="entry name" value="Transketolase_fam"/>
</dbReference>
<dbReference type="InterPro" id="IPR005474">
    <property type="entry name" value="Transketolase_N"/>
</dbReference>
<dbReference type="NCBIfam" id="TIGR00232">
    <property type="entry name" value="tktlase_bact"/>
    <property type="match status" value="1"/>
</dbReference>
<dbReference type="PANTHER" id="PTHR43522">
    <property type="entry name" value="TRANSKETOLASE"/>
    <property type="match status" value="1"/>
</dbReference>
<dbReference type="PANTHER" id="PTHR43522:SF13">
    <property type="entry name" value="TRANSKETOLASE 2"/>
    <property type="match status" value="1"/>
</dbReference>
<dbReference type="Pfam" id="PF02779">
    <property type="entry name" value="Transket_pyr"/>
    <property type="match status" value="1"/>
</dbReference>
<dbReference type="Pfam" id="PF22613">
    <property type="entry name" value="Transketolase_C_1"/>
    <property type="match status" value="1"/>
</dbReference>
<dbReference type="Pfam" id="PF00456">
    <property type="entry name" value="Transketolase_N"/>
    <property type="match status" value="1"/>
</dbReference>
<dbReference type="SMART" id="SM00861">
    <property type="entry name" value="Transket_pyr"/>
    <property type="match status" value="1"/>
</dbReference>
<dbReference type="SUPFAM" id="SSF52518">
    <property type="entry name" value="Thiamin diphosphate-binding fold (THDP-binding)"/>
    <property type="match status" value="2"/>
</dbReference>
<dbReference type="SUPFAM" id="SSF52922">
    <property type="entry name" value="TK C-terminal domain-like"/>
    <property type="match status" value="1"/>
</dbReference>
<dbReference type="PROSITE" id="PS00801">
    <property type="entry name" value="TRANSKETOLASE_1"/>
    <property type="match status" value="1"/>
</dbReference>
<dbReference type="PROSITE" id="PS00802">
    <property type="entry name" value="TRANSKETOLASE_2"/>
    <property type="match status" value="1"/>
</dbReference>
<organism>
    <name type="scientific">Escherichia coli (strain K12)</name>
    <dbReference type="NCBI Taxonomy" id="83333"/>
    <lineage>
        <taxon>Bacteria</taxon>
        <taxon>Pseudomonadati</taxon>
        <taxon>Pseudomonadota</taxon>
        <taxon>Gammaproteobacteria</taxon>
        <taxon>Enterobacterales</taxon>
        <taxon>Enterobacteriaceae</taxon>
        <taxon>Escherichia</taxon>
    </lineage>
</organism>
<keyword id="KW-0007">Acetylation</keyword>
<keyword id="KW-0106">Calcium</keyword>
<keyword id="KW-0460">Magnesium</keyword>
<keyword id="KW-0479">Metal-binding</keyword>
<keyword id="KW-1185">Reference proteome</keyword>
<keyword id="KW-0786">Thiamine pyrophosphate</keyword>
<keyword id="KW-0808">Transferase</keyword>
<gene>
    <name evidence="4" type="primary">tktB</name>
    <name type="ordered locus">b2465</name>
    <name type="ordered locus">JW2449</name>
</gene>
<proteinExistence type="evidence at protein level"/>
<evidence type="ECO:0000250" key="1"/>
<evidence type="ECO:0000269" key="2">
    <source>
    </source>
</evidence>
<evidence type="ECO:0000269" key="3">
    <source>
    </source>
</evidence>
<evidence type="ECO:0000303" key="4">
    <source>
    </source>
</evidence>
<evidence type="ECO:0000305" key="5"/>
<comment type="function">
    <text evidence="3">Catalyzes the reversible transfer of a two-carbon ketol group from sedoheptulose-7-phosphate to glyceraldehyde-3-phosphate, producing xylulose-5-phosphate and ribose-5-phosphate. Catalyzes the transfer of a two-carbon ketol group from a ketose donor to an aldose acceptor, via a covalent intermediate with the cofactor thiamine pyrophosphate.</text>
</comment>
<comment type="catalytic activity">
    <reaction evidence="3">
        <text>D-sedoheptulose 7-phosphate + D-glyceraldehyde 3-phosphate = aldehydo-D-ribose 5-phosphate + D-xylulose 5-phosphate</text>
        <dbReference type="Rhea" id="RHEA:10508"/>
        <dbReference type="ChEBI" id="CHEBI:57483"/>
        <dbReference type="ChEBI" id="CHEBI:57737"/>
        <dbReference type="ChEBI" id="CHEBI:58273"/>
        <dbReference type="ChEBI" id="CHEBI:59776"/>
        <dbReference type="EC" id="2.2.1.1"/>
    </reaction>
    <physiologicalReaction direction="left-to-right" evidence="3">
        <dbReference type="Rhea" id="RHEA:10509"/>
    </physiologicalReaction>
    <physiologicalReaction direction="right-to-left" evidence="3">
        <dbReference type="Rhea" id="RHEA:10510"/>
    </physiologicalReaction>
</comment>
<comment type="cofactor">
    <cofactor evidence="1">
        <name>Mg(2+)</name>
        <dbReference type="ChEBI" id="CHEBI:18420"/>
    </cofactor>
    <cofactor evidence="1">
        <name>Ca(2+)</name>
        <dbReference type="ChEBI" id="CHEBI:29108"/>
    </cofactor>
    <cofactor evidence="1">
        <name>Mn(2+)</name>
        <dbReference type="ChEBI" id="CHEBI:29035"/>
    </cofactor>
    <cofactor evidence="1">
        <name>Co(2+)</name>
        <dbReference type="ChEBI" id="CHEBI:48828"/>
    </cofactor>
    <text evidence="1">Binds 1 Mg(2+) ion per subunit. Can also utilize other divalent metal cations, such as Ca(2+), Mn(2+) and Co(2+).</text>
</comment>
<comment type="cofactor">
    <cofactor evidence="1">
        <name>thiamine diphosphate</name>
        <dbReference type="ChEBI" id="CHEBI:58937"/>
    </cofactor>
    <text evidence="1">Binds 1 thiamine pyrophosphate per subunit.</text>
</comment>
<comment type="subunit">
    <text evidence="1">Homodimer.</text>
</comment>
<comment type="similarity">
    <text evidence="5">Belongs to the transketolase family.</text>
</comment>
<accession>P33570</accession>
<feature type="chain" id="PRO_0000191857" description="Transketolase 2">
    <location>
        <begin position="1"/>
        <end position="667"/>
    </location>
</feature>
<feature type="active site" description="Proton donor" evidence="1">
    <location>
        <position position="410"/>
    </location>
</feature>
<feature type="binding site" evidence="1">
    <location>
        <position position="25"/>
    </location>
    <ligand>
        <name>substrate</name>
    </ligand>
</feature>
<feature type="binding site" evidence="1">
    <location>
        <position position="65"/>
    </location>
    <ligand>
        <name>thiamine diphosphate</name>
        <dbReference type="ChEBI" id="CHEBI:58937"/>
    </ligand>
</feature>
<feature type="binding site" evidence="1">
    <location>
        <begin position="113"/>
        <end position="115"/>
    </location>
    <ligand>
        <name>thiamine diphosphate</name>
        <dbReference type="ChEBI" id="CHEBI:58937"/>
    </ligand>
</feature>
<feature type="binding site" evidence="1">
    <location>
        <position position="154"/>
    </location>
    <ligand>
        <name>Mg(2+)</name>
        <dbReference type="ChEBI" id="CHEBI:18420"/>
    </ligand>
</feature>
<feature type="binding site" evidence="1">
    <location>
        <position position="155"/>
    </location>
    <ligand>
        <name>thiamine diphosphate</name>
        <dbReference type="ChEBI" id="CHEBI:58937"/>
    </ligand>
</feature>
<feature type="binding site" evidence="1">
    <location>
        <position position="184"/>
    </location>
    <ligand>
        <name>Mg(2+)</name>
        <dbReference type="ChEBI" id="CHEBI:18420"/>
    </ligand>
</feature>
<feature type="binding site" evidence="1">
    <location>
        <position position="184"/>
    </location>
    <ligand>
        <name>thiamine diphosphate</name>
        <dbReference type="ChEBI" id="CHEBI:58937"/>
    </ligand>
</feature>
<feature type="binding site" evidence="1">
    <location>
        <position position="186"/>
    </location>
    <ligand>
        <name>Mg(2+)</name>
        <dbReference type="ChEBI" id="CHEBI:18420"/>
    </ligand>
</feature>
<feature type="binding site" evidence="1">
    <location>
        <position position="260"/>
    </location>
    <ligand>
        <name>substrate</name>
    </ligand>
</feature>
<feature type="binding site" evidence="1">
    <location>
        <position position="260"/>
    </location>
    <ligand>
        <name>thiamine diphosphate</name>
        <dbReference type="ChEBI" id="CHEBI:58937"/>
    </ligand>
</feature>
<feature type="binding site" evidence="1">
    <location>
        <position position="357"/>
    </location>
    <ligand>
        <name>substrate</name>
    </ligand>
</feature>
<feature type="binding site" evidence="1">
    <location>
        <position position="384"/>
    </location>
    <ligand>
        <name>substrate</name>
    </ligand>
</feature>
<feature type="binding site" evidence="1">
    <location>
        <position position="436"/>
    </location>
    <ligand>
        <name>thiamine diphosphate</name>
        <dbReference type="ChEBI" id="CHEBI:58937"/>
    </ligand>
</feature>
<feature type="binding site" evidence="1">
    <location>
        <position position="460"/>
    </location>
    <ligand>
        <name>substrate</name>
    </ligand>
</feature>
<feature type="binding site" evidence="1">
    <location>
        <position position="468"/>
    </location>
    <ligand>
        <name>substrate</name>
    </ligand>
</feature>
<feature type="binding site" evidence="1">
    <location>
        <position position="519"/>
    </location>
    <ligand>
        <name>substrate</name>
    </ligand>
</feature>
<feature type="site" description="Important for catalytic activity" evidence="1">
    <location>
        <position position="25"/>
    </location>
</feature>
<feature type="site" description="Important for catalytic activity" evidence="1">
    <location>
        <position position="260"/>
    </location>
</feature>
<feature type="modified residue" description="N6-acetyllysine" evidence="2">
    <location>
        <position position="342"/>
    </location>
</feature>
<reference key="1">
    <citation type="journal article" date="1993" name="J. Bacteriol.">
        <title>Identification and characterization of the tktB gene encoding a second transketolase in Escherichia coli K-12.</title>
        <authorList>
            <person name="Iida A."/>
            <person name="Teshiba S."/>
            <person name="Mizobuchi K."/>
        </authorList>
    </citation>
    <scope>NUCLEOTIDE SEQUENCE [GENOMIC DNA]</scope>
    <scope>FUNCTION</scope>
    <scope>CATALYTIC ACTIVITY</scope>
    <source>
        <strain>K12</strain>
    </source>
</reference>
<reference key="2">
    <citation type="journal article" date="1997" name="DNA Res.">
        <title>Construction of a contiguous 874-kb sequence of the Escherichia coli-K12 genome corresponding to 50.0-68.8 min on the linkage map and analysis of its sequence features.</title>
        <authorList>
            <person name="Yamamoto Y."/>
            <person name="Aiba H."/>
            <person name="Baba T."/>
            <person name="Hayashi K."/>
            <person name="Inada T."/>
            <person name="Isono K."/>
            <person name="Itoh T."/>
            <person name="Kimura S."/>
            <person name="Kitagawa M."/>
            <person name="Makino K."/>
            <person name="Miki T."/>
            <person name="Mitsuhashi N."/>
            <person name="Mizobuchi K."/>
            <person name="Mori H."/>
            <person name="Nakade S."/>
            <person name="Nakamura Y."/>
            <person name="Nashimoto H."/>
            <person name="Oshima T."/>
            <person name="Oyama S."/>
            <person name="Saito N."/>
            <person name="Sampei G."/>
            <person name="Satoh Y."/>
            <person name="Sivasundaram S."/>
            <person name="Tagami H."/>
            <person name="Takahashi H."/>
            <person name="Takeda J."/>
            <person name="Takemoto K."/>
            <person name="Uehara K."/>
            <person name="Wada C."/>
            <person name="Yamagata S."/>
            <person name="Horiuchi T."/>
        </authorList>
    </citation>
    <scope>NUCLEOTIDE SEQUENCE [LARGE SCALE GENOMIC DNA]</scope>
    <source>
        <strain>K12 / W3110 / ATCC 27325 / DSM 5911</strain>
    </source>
</reference>
<reference key="3">
    <citation type="journal article" date="1997" name="Science">
        <title>The complete genome sequence of Escherichia coli K-12.</title>
        <authorList>
            <person name="Blattner F.R."/>
            <person name="Plunkett G. III"/>
            <person name="Bloch C.A."/>
            <person name="Perna N.T."/>
            <person name="Burland V."/>
            <person name="Riley M."/>
            <person name="Collado-Vides J."/>
            <person name="Glasner J.D."/>
            <person name="Rode C.K."/>
            <person name="Mayhew G.F."/>
            <person name="Gregor J."/>
            <person name="Davis N.W."/>
            <person name="Kirkpatrick H.A."/>
            <person name="Goeden M.A."/>
            <person name="Rose D.J."/>
            <person name="Mau B."/>
            <person name="Shao Y."/>
        </authorList>
    </citation>
    <scope>NUCLEOTIDE SEQUENCE [LARGE SCALE GENOMIC DNA]</scope>
    <source>
        <strain>K12 / MG1655 / ATCC 47076</strain>
    </source>
</reference>
<reference key="4">
    <citation type="journal article" date="2006" name="Mol. Syst. Biol.">
        <title>Highly accurate genome sequences of Escherichia coli K-12 strains MG1655 and W3110.</title>
        <authorList>
            <person name="Hayashi K."/>
            <person name="Morooka N."/>
            <person name="Yamamoto Y."/>
            <person name="Fujita K."/>
            <person name="Isono K."/>
            <person name="Choi S."/>
            <person name="Ohtsubo E."/>
            <person name="Baba T."/>
            <person name="Wanner B.L."/>
            <person name="Mori H."/>
            <person name="Horiuchi T."/>
        </authorList>
    </citation>
    <scope>NUCLEOTIDE SEQUENCE [LARGE SCALE GENOMIC DNA]</scope>
    <source>
        <strain>K12 / W3110 / ATCC 27325 / DSM 5911</strain>
    </source>
</reference>
<reference key="5">
    <citation type="journal article" date="2009" name="Mol. Cell. Proteomics">
        <title>Lysine acetylation is a highly abundant and evolutionarily conserved modification in Escherichia coli.</title>
        <authorList>
            <person name="Zhang J."/>
            <person name="Sprung R."/>
            <person name="Pei J."/>
            <person name="Tan X."/>
            <person name="Kim S."/>
            <person name="Zhu H."/>
            <person name="Liu C.F."/>
            <person name="Grishin N.V."/>
            <person name="Zhao Y."/>
        </authorList>
    </citation>
    <scope>ACETYLATION [LARGE SCALE ANALYSIS] AT LYS-342</scope>
    <scope>IDENTIFICATION BY MASS SPECTROMETRY</scope>
    <source>
        <strain>K12 / JW1106</strain>
        <strain>K12 / MG1655 / ATCC 47076</strain>
    </source>
</reference>